<sequence length="150" mass="17009">MQVLTKRYPKNCLLKVMDRYSAVVRNMEQVVMIPSLLRDVELSGSGGSVQDGAPDLYTYFTMLKSICVEVDHGLLPREEWQAKVAGNEGSEAENEAAETEEAEEDRLSEELDLEAQFHLHFSSLHHILTHLTQKAQEVTQKYQEMTGQVL</sequence>
<name>THRSP_RAT</name>
<keyword id="KW-0963">Cytoplasm</keyword>
<keyword id="KW-0444">Lipid biosynthesis</keyword>
<keyword id="KW-0443">Lipid metabolism</keyword>
<keyword id="KW-0539">Nucleus</keyword>
<keyword id="KW-0597">Phosphoprotein</keyword>
<keyword id="KW-1185">Reference proteome</keyword>
<keyword id="KW-0804">Transcription</keyword>
<keyword id="KW-0805">Transcription regulation</keyword>
<dbReference type="EMBL" id="K01934">
    <property type="protein sequence ID" value="AAA96608.1"/>
    <property type="molecule type" value="Genomic_DNA"/>
</dbReference>
<dbReference type="EMBL" id="M33553">
    <property type="protein sequence ID" value="AAA42099.1"/>
    <property type="molecule type" value="Genomic_DNA"/>
</dbReference>
<dbReference type="PIR" id="A05173">
    <property type="entry name" value="A05173"/>
</dbReference>
<dbReference type="SMR" id="P04143"/>
<dbReference type="FunCoup" id="P04143">
    <property type="interactions" value="17"/>
</dbReference>
<dbReference type="STRING" id="10116.ENSRNOP00000016540"/>
<dbReference type="iPTMnet" id="P04143"/>
<dbReference type="PhosphoSitePlus" id="P04143"/>
<dbReference type="PaxDb" id="10116-ENSRNOP00000016540"/>
<dbReference type="UCSC" id="RGD:3859">
    <property type="organism name" value="rat"/>
</dbReference>
<dbReference type="AGR" id="RGD:3859"/>
<dbReference type="RGD" id="3859">
    <property type="gene designation" value="Thrsp"/>
</dbReference>
<dbReference type="eggNOG" id="ENOG502S7IQ">
    <property type="taxonomic scope" value="Eukaryota"/>
</dbReference>
<dbReference type="InParanoid" id="P04143"/>
<dbReference type="PhylomeDB" id="P04143"/>
<dbReference type="Reactome" id="R-RNO-200425">
    <property type="pathway name" value="Carnitine shuttle"/>
</dbReference>
<dbReference type="PRO" id="PR:P04143"/>
<dbReference type="Proteomes" id="UP000002494">
    <property type="component" value="Unplaced"/>
</dbReference>
<dbReference type="GO" id="GO:0005829">
    <property type="term" value="C:cytosol"/>
    <property type="evidence" value="ECO:0000250"/>
    <property type="project" value="UniProtKB"/>
</dbReference>
<dbReference type="GO" id="GO:0005634">
    <property type="term" value="C:nucleus"/>
    <property type="evidence" value="ECO:0007669"/>
    <property type="project" value="UniProtKB-SubCell"/>
</dbReference>
<dbReference type="GO" id="GO:0042802">
    <property type="term" value="F:identical protein binding"/>
    <property type="evidence" value="ECO:0000266"/>
    <property type="project" value="RGD"/>
</dbReference>
<dbReference type="GO" id="GO:0140678">
    <property type="term" value="F:molecular function inhibitor activity"/>
    <property type="evidence" value="ECO:0000266"/>
    <property type="project" value="RGD"/>
</dbReference>
<dbReference type="GO" id="GO:0042803">
    <property type="term" value="F:protein homodimerization activity"/>
    <property type="evidence" value="ECO:0000266"/>
    <property type="project" value="RGD"/>
</dbReference>
<dbReference type="GO" id="GO:0006629">
    <property type="term" value="P:lipid metabolic process"/>
    <property type="evidence" value="ECO:0007669"/>
    <property type="project" value="UniProtKB-KW"/>
</dbReference>
<dbReference type="GO" id="GO:0046890">
    <property type="term" value="P:regulation of lipid biosynthetic process"/>
    <property type="evidence" value="ECO:0000315"/>
    <property type="project" value="UniProtKB"/>
</dbReference>
<dbReference type="GO" id="GO:0010866">
    <property type="term" value="P:regulation of triglyceride biosynthetic process"/>
    <property type="evidence" value="ECO:0000266"/>
    <property type="project" value="RGD"/>
</dbReference>
<dbReference type="GO" id="GO:0009617">
    <property type="term" value="P:response to bacterium"/>
    <property type="evidence" value="ECO:0000266"/>
    <property type="project" value="RGD"/>
</dbReference>
<dbReference type="Gene3D" id="6.10.140.1610">
    <property type="match status" value="1"/>
</dbReference>
<dbReference type="InterPro" id="IPR053719">
    <property type="entry name" value="Lipogen_MT_Stabilize_sf"/>
</dbReference>
<dbReference type="InterPro" id="IPR009786">
    <property type="entry name" value="Spot_14"/>
</dbReference>
<dbReference type="PANTHER" id="PTHR14315">
    <property type="entry name" value="SPOT14 FAMILY MEMBER"/>
    <property type="match status" value="1"/>
</dbReference>
<dbReference type="PANTHER" id="PTHR14315:SF18">
    <property type="entry name" value="THYROID HORMONE-INDUCIBLE HEPATIC PROTEIN"/>
    <property type="match status" value="1"/>
</dbReference>
<dbReference type="Pfam" id="PF07084">
    <property type="entry name" value="Spot_14"/>
    <property type="match status" value="1"/>
</dbReference>
<protein>
    <recommendedName>
        <fullName>Thyroid hormone-inducible hepatic protein</fullName>
    </recommendedName>
    <alternativeName>
        <fullName>Spot 14 protein</fullName>
        <shortName>S14</shortName>
        <shortName>SPOT14</shortName>
    </alternativeName>
</protein>
<feature type="chain" id="PRO_0000123775" description="Thyroid hormone-inducible hepatic protein">
    <location>
        <begin position="1"/>
        <end position="150"/>
    </location>
</feature>
<feature type="region of interest" description="Disordered" evidence="2">
    <location>
        <begin position="83"/>
        <end position="105"/>
    </location>
</feature>
<feature type="compositionally biased region" description="Acidic residues" evidence="2">
    <location>
        <begin position="90"/>
        <end position="105"/>
    </location>
</feature>
<feature type="modified residue" description="Phosphoserine" evidence="9">
    <location>
        <position position="90"/>
    </location>
</feature>
<feature type="sequence conflict" description="In Ref. 2." evidence="8" ref="2">
    <original>S</original>
    <variation>M</variation>
    <location>
        <position position="43"/>
    </location>
</feature>
<feature type="sequence conflict" description="In Ref. 2." evidence="8" ref="2">
    <original>S</original>
    <variation>Y</variation>
    <location>
        <position position="45"/>
    </location>
</feature>
<gene>
    <name type="primary">Thrsp</name>
    <name type="synonym">S14</name>
</gene>
<accession>P04143</accession>
<accession>Q63536</accession>
<comment type="function">
    <text evidence="1 4 7">Plays a role in the regulation of lipogenesis, especially in lactating mammary gland. Important for the biosynthesis of triglycerides with medium-length fatty acid chains. May modulate lipogenesis by interacting with MID1IP1 and preventing its interaction with ACACA. May function as transcriptional coactivator. May modulate the transcription factor activity of THRB (By similarity).</text>
</comment>
<comment type="subunit">
    <text evidence="1">Homodimer. Heterodimer with MID1IP1. Interacts with THRB and PLAGL1 (By similarity).</text>
</comment>
<comment type="subcellular location">
    <subcellularLocation>
        <location evidence="3">Nucleus</location>
    </subcellularLocation>
    <subcellularLocation>
        <location evidence="1">Cytoplasm</location>
    </subcellularLocation>
</comment>
<comment type="tissue specificity">
    <text evidence="6">Highly expressed in liver, lactating mammary gland, epididymal, retroperitoneal and brown fat. Mainly expressed in tissues that synthesize triglycerides.</text>
</comment>
<comment type="induction">
    <text evidence="5 6 7">The mRNA levels in rat liver are up-regulated in response to thyroid hormone (T3) and a carbohydrate-rich diet. Up-regulated in liver at the time of weaning, when pups switch from a high-fat milk diet to having to synthesize their own fatty acids. Down-regulated by fasting. Levels of mRNA increase within 20 minutes of T3 administration.</text>
</comment>
<comment type="similarity">
    <text evidence="8">Belongs to the SPOT14 family.</text>
</comment>
<proteinExistence type="evidence at protein level"/>
<organism>
    <name type="scientific">Rattus norvegicus</name>
    <name type="common">Rat</name>
    <dbReference type="NCBI Taxonomy" id="10116"/>
    <lineage>
        <taxon>Eukaryota</taxon>
        <taxon>Metazoa</taxon>
        <taxon>Chordata</taxon>
        <taxon>Craniata</taxon>
        <taxon>Vertebrata</taxon>
        <taxon>Euteleostomi</taxon>
        <taxon>Mammalia</taxon>
        <taxon>Eutheria</taxon>
        <taxon>Euarchontoglires</taxon>
        <taxon>Glires</taxon>
        <taxon>Rodentia</taxon>
        <taxon>Myomorpha</taxon>
        <taxon>Muroidea</taxon>
        <taxon>Muridae</taxon>
        <taxon>Murinae</taxon>
        <taxon>Rattus</taxon>
    </lineage>
</organism>
<evidence type="ECO:0000250" key="1"/>
<evidence type="ECO:0000256" key="2">
    <source>
        <dbReference type="SAM" id="MobiDB-lite"/>
    </source>
</evidence>
<evidence type="ECO:0000269" key="3">
    <source>
    </source>
</evidence>
<evidence type="ECO:0000269" key="4">
    <source>
    </source>
</evidence>
<evidence type="ECO:0000269" key="5">
    <source>
    </source>
</evidence>
<evidence type="ECO:0000269" key="6">
    <source>
    </source>
</evidence>
<evidence type="ECO:0000269" key="7">
    <source>
    </source>
</evidence>
<evidence type="ECO:0000305" key="8"/>
<evidence type="ECO:0007744" key="9">
    <source>
    </source>
</evidence>
<reference key="1">
    <citation type="journal article" date="1984" name="J. Biol. Chem.">
        <title>Characterization of a thyroid hormone-responsive gene from rat.</title>
        <authorList>
            <person name="Liaw C.W."/>
            <person name="Towle H.C."/>
        </authorList>
    </citation>
    <scope>NUCLEOTIDE SEQUENCE [GENOMIC DNA]</scope>
</reference>
<reference key="2">
    <citation type="journal article" date="1990" name="J. Biol. Chem.">
        <title>Thyroid hormone and dietary carbohydrate interact to regulate rat liver S14 gene transcription and chromatin structure.</title>
        <authorList>
            <person name="Jump D.B."/>
            <person name="Bell A."/>
            <person name="Santiago V."/>
        </authorList>
    </citation>
    <scope>NUCLEOTIDE SEQUENCE [GENOMIC DNA]</scope>
    <scope>INDUCTION</scope>
    <source>
        <tissue>Liver</tissue>
    </source>
</reference>
<reference key="3">
    <citation type="journal article" date="1985" name="Endocrinology">
        <title>High basal expression and 3,5,3'-triiodothyronine regulation of messenger ribonucleic acid S14 in lipogenic tissues.</title>
        <authorList>
            <person name="Jump D.B."/>
            <person name="Oppenheimer J.H."/>
        </authorList>
    </citation>
    <scope>TISSUE SPECIFICITY</scope>
    <scope>INDUCTION</scope>
</reference>
<reference key="4">
    <citation type="journal article" date="1992" name="Endocrinology">
        <title>Nuclear localization and hepatic zonation of rat 'spot 14' protein: immunohistochemical investigation employing anti-fusion protein antibodies.</title>
        <authorList>
            <person name="Kinlaw W.B."/>
            <person name="Tron P."/>
            <person name="Friedmann A.S."/>
        </authorList>
    </citation>
    <scope>SUBCELLULAR LOCATION</scope>
</reference>
<reference key="5">
    <citation type="journal article" date="1997" name="J. Biol. Chem.">
        <title>'Spot 14' protein functions at the pretranslational level in the regulation of hepatic metabolism by thyroid hormone and glucose.</title>
        <authorList>
            <person name="Brown S.B."/>
            <person name="Maloney M."/>
            <person name="Kinlaw W.B."/>
        </authorList>
    </citation>
    <scope>FUNCTION</scope>
    <scope>INDUCTION</scope>
</reference>
<reference key="6">
    <citation type="journal article" date="2010" name="Endocrinology">
        <title>Overlapping roles of the glucose-responsive genes, S14 and S14R, in hepatic lipogenesis.</title>
        <authorList>
            <person name="Aipoalani D.L."/>
            <person name="O'Callaghan B.L."/>
            <person name="Mashek D.G."/>
            <person name="Mariash C.N."/>
            <person name="Towle H.C."/>
        </authorList>
    </citation>
    <scope>FUNCTION</scope>
</reference>
<reference key="7">
    <citation type="journal article" date="2012" name="Nat. Commun.">
        <title>Quantitative maps of protein phosphorylation sites across 14 different rat organs and tissues.</title>
        <authorList>
            <person name="Lundby A."/>
            <person name="Secher A."/>
            <person name="Lage K."/>
            <person name="Nordsborg N.B."/>
            <person name="Dmytriyev A."/>
            <person name="Lundby C."/>
            <person name="Olsen J.V."/>
        </authorList>
    </citation>
    <scope>PHOSPHORYLATION [LARGE SCALE ANALYSIS] AT SER-90</scope>
    <scope>IDENTIFICATION BY MASS SPECTROMETRY [LARGE SCALE ANALYSIS]</scope>
</reference>